<dbReference type="EMBL" id="AY724813">
    <property type="protein sequence ID" value="AAU21052.1"/>
    <property type="molecule type" value="Genomic_DNA"/>
</dbReference>
<dbReference type="FunCoup" id="Q646G7">
    <property type="interactions" value="442"/>
</dbReference>
<dbReference type="STRING" id="9593.ENSGGOP00000013449"/>
<dbReference type="GlyCosmos" id="Q646G7">
    <property type="glycosylation" value="1 site, No reported glycans"/>
</dbReference>
<dbReference type="eggNOG" id="ENOG502S2SI">
    <property type="taxonomic scope" value="Eukaryota"/>
</dbReference>
<dbReference type="InParanoid" id="Q646G7"/>
<dbReference type="Proteomes" id="UP000001519">
    <property type="component" value="Unplaced"/>
</dbReference>
<dbReference type="GO" id="GO:0016020">
    <property type="term" value="C:membrane"/>
    <property type="evidence" value="ECO:0000318"/>
    <property type="project" value="GO_Central"/>
</dbReference>
<dbReference type="GO" id="GO:0005886">
    <property type="term" value="C:plasma membrane"/>
    <property type="evidence" value="ECO:0007669"/>
    <property type="project" value="UniProtKB-ARBA"/>
</dbReference>
<dbReference type="GO" id="GO:0033038">
    <property type="term" value="F:bitter taste receptor activity"/>
    <property type="evidence" value="ECO:0000318"/>
    <property type="project" value="GO_Central"/>
</dbReference>
<dbReference type="GO" id="GO:0004930">
    <property type="term" value="F:G protein-coupled receptor activity"/>
    <property type="evidence" value="ECO:0007669"/>
    <property type="project" value="UniProtKB-KW"/>
</dbReference>
<dbReference type="GO" id="GO:0001580">
    <property type="term" value="P:detection of chemical stimulus involved in sensory perception of bitter taste"/>
    <property type="evidence" value="ECO:0000318"/>
    <property type="project" value="GO_Central"/>
</dbReference>
<dbReference type="CDD" id="cd15016">
    <property type="entry name" value="7tm_TAS2R1"/>
    <property type="match status" value="1"/>
</dbReference>
<dbReference type="FunFam" id="1.20.1070.10:FF:000055">
    <property type="entry name" value="Taste receptor type 2"/>
    <property type="match status" value="1"/>
</dbReference>
<dbReference type="Gene3D" id="1.20.1070.10">
    <property type="entry name" value="Rhodopsin 7-helix transmembrane proteins"/>
    <property type="match status" value="1"/>
</dbReference>
<dbReference type="InterPro" id="IPR007960">
    <property type="entry name" value="TAS2R"/>
</dbReference>
<dbReference type="PANTHER" id="PTHR11394">
    <property type="entry name" value="TASTE RECEPTOR TYPE 2"/>
    <property type="match status" value="1"/>
</dbReference>
<dbReference type="PANTHER" id="PTHR11394:SF149">
    <property type="entry name" value="TASTE RECEPTOR TYPE 2 MEMBER 1"/>
    <property type="match status" value="1"/>
</dbReference>
<dbReference type="Pfam" id="PF05296">
    <property type="entry name" value="TAS2R"/>
    <property type="match status" value="1"/>
</dbReference>
<dbReference type="SUPFAM" id="SSF81321">
    <property type="entry name" value="Family A G protein-coupled receptor-like"/>
    <property type="match status" value="1"/>
</dbReference>
<evidence type="ECO:0000250" key="1"/>
<evidence type="ECO:0000255" key="2"/>
<evidence type="ECO:0000305" key="3"/>
<sequence>MLESHLIIYFLLAVIQFLLGIFTNGIIVVVNGIDLIKHRKMAPLDLLLSCLAVSRIFLQLFIFYVNVIVIFFIEFIMCSANCAILLFINELELWLATWLGVFYCAKVASVRHPLFXWLKMRISKLVPWMILGSLLYVSMICVFHSKYAGFMVPYFLRNFFSQNTTIQKEDTLAIQIFSFVAEFSVPLLIFLVAVLLLIFSLGRHTRQMRNTVAGSRVPGRGAPISALLSILSFLILYFSHCMIKVFLSSLKFHIRRFIFLFFILVIGIYPSGHSLILILGNPKLKQNAKKFLLHSKCCQ</sequence>
<reference key="1">
    <citation type="journal article" date="2005" name="Mol. Biol. Evol.">
        <title>Evolution of bitter taste receptors in humans and apes.</title>
        <authorList>
            <person name="Fischer A."/>
            <person name="Gilad Y."/>
            <person name="Man O."/>
            <person name="Paeaebo S."/>
        </authorList>
    </citation>
    <scope>NUCLEOTIDE SEQUENCE [GENOMIC DNA]</scope>
</reference>
<gene>
    <name type="primary">TAS2R1</name>
</gene>
<keyword id="KW-0297">G-protein coupled receptor</keyword>
<keyword id="KW-0325">Glycoprotein</keyword>
<keyword id="KW-0472">Membrane</keyword>
<keyword id="KW-0675">Receptor</keyword>
<keyword id="KW-1185">Reference proteome</keyword>
<keyword id="KW-0716">Sensory transduction</keyword>
<keyword id="KW-0919">Taste</keyword>
<keyword id="KW-0807">Transducer</keyword>
<keyword id="KW-0812">Transmembrane</keyword>
<keyword id="KW-1133">Transmembrane helix</keyword>
<accession>Q646G7</accession>
<feature type="chain" id="PRO_0000082187" description="Taste receptor type 2 member 1">
    <location>
        <begin position="1"/>
        <end position="299"/>
    </location>
</feature>
<feature type="topological domain" description="Extracellular" evidence="2">
    <location>
        <begin position="1"/>
        <end position="9"/>
    </location>
</feature>
<feature type="transmembrane region" description="Helical; Name=1" evidence="2">
    <location>
        <begin position="10"/>
        <end position="30"/>
    </location>
</feature>
<feature type="topological domain" description="Cytoplasmic" evidence="2">
    <location>
        <begin position="31"/>
        <end position="55"/>
    </location>
</feature>
<feature type="transmembrane region" description="Helical; Name=2" evidence="2">
    <location>
        <begin position="56"/>
        <end position="76"/>
    </location>
</feature>
<feature type="topological domain" description="Extracellular" evidence="2">
    <location>
        <begin position="77"/>
        <end position="81"/>
    </location>
</feature>
<feature type="transmembrane region" description="Helical; Name=3" evidence="2">
    <location>
        <begin position="82"/>
        <end position="102"/>
    </location>
</feature>
<feature type="topological domain" description="Cytoplasmic" evidence="2">
    <location>
        <begin position="103"/>
        <end position="124"/>
    </location>
</feature>
<feature type="transmembrane region" description="Helical; Name=4" evidence="2">
    <location>
        <begin position="125"/>
        <end position="145"/>
    </location>
</feature>
<feature type="topological domain" description="Extracellular" evidence="2">
    <location>
        <begin position="146"/>
        <end position="178"/>
    </location>
</feature>
<feature type="transmembrane region" description="Helical; Name=5" evidence="2">
    <location>
        <begin position="179"/>
        <end position="199"/>
    </location>
</feature>
<feature type="topological domain" description="Cytoplasmic" evidence="2">
    <location>
        <begin position="200"/>
        <end position="222"/>
    </location>
</feature>
<feature type="transmembrane region" description="Helical; Name=6" evidence="2">
    <location>
        <begin position="223"/>
        <end position="243"/>
    </location>
</feature>
<feature type="topological domain" description="Extracellular" evidence="2">
    <location>
        <begin position="244"/>
        <end position="257"/>
    </location>
</feature>
<feature type="transmembrane region" description="Helical; Name=7" evidence="2">
    <location>
        <begin position="258"/>
        <end position="278"/>
    </location>
</feature>
<feature type="topological domain" description="Cytoplasmic" evidence="2">
    <location>
        <begin position="279"/>
        <end position="299"/>
    </location>
</feature>
<feature type="glycosylation site" description="N-linked (GlcNAc...) asparagine" evidence="2">
    <location>
        <position position="163"/>
    </location>
</feature>
<name>TA2R1_GORGO</name>
<organism>
    <name type="scientific">Gorilla gorilla gorilla</name>
    <name type="common">Western lowland gorilla</name>
    <dbReference type="NCBI Taxonomy" id="9595"/>
    <lineage>
        <taxon>Eukaryota</taxon>
        <taxon>Metazoa</taxon>
        <taxon>Chordata</taxon>
        <taxon>Craniata</taxon>
        <taxon>Vertebrata</taxon>
        <taxon>Euteleostomi</taxon>
        <taxon>Mammalia</taxon>
        <taxon>Eutheria</taxon>
        <taxon>Euarchontoglires</taxon>
        <taxon>Primates</taxon>
        <taxon>Haplorrhini</taxon>
        <taxon>Catarrhini</taxon>
        <taxon>Hominidae</taxon>
        <taxon>Gorilla</taxon>
    </lineage>
</organism>
<proteinExistence type="inferred from homology"/>
<protein>
    <recommendedName>
        <fullName>Taste receptor type 2 member 1</fullName>
        <shortName>T2R1</shortName>
    </recommendedName>
</protein>
<comment type="function">
    <text evidence="1">Receptor that may play a role in the perception of bitterness and is gustducin-linked. May play a role in sensing the chemical composition of the gastrointestinal content. The activity of this receptor may stimulate alpha gustducin, mediate PLC-beta-2 activation and lead to the gating of TRPM5 (By similarity).</text>
</comment>
<comment type="subcellular location">
    <subcellularLocation>
        <location>Membrane</location>
        <topology>Multi-pass membrane protein</topology>
    </subcellularLocation>
</comment>
<comment type="miscellaneous">
    <text>Most taste cells may be activated by a limited number of bitter compounds; individual taste cells can discriminate among bitter stimuli.</text>
</comment>
<comment type="similarity">
    <text evidence="3">Belongs to the G-protein coupled receptor T2R family.</text>
</comment>